<protein>
    <recommendedName>
        <fullName>Capsid protein</fullName>
        <shortName>CP</shortName>
    </recommendedName>
    <alternativeName>
        <fullName>Coat protein</fullName>
    </alternativeName>
</protein>
<gene>
    <name type="ORF">ORF IV</name>
</gene>
<organismHost>
    <name type="scientific">Arabidopsis thaliana</name>
    <name type="common">Mouse-ear cress</name>
    <dbReference type="NCBI Taxonomy" id="3702"/>
</organismHost>
<organismHost>
    <name type="scientific">Brassica</name>
    <dbReference type="NCBI Taxonomy" id="3705"/>
</organismHost>
<organismHost>
    <name type="scientific">Raphanus</name>
    <dbReference type="NCBI Taxonomy" id="3725"/>
</organismHost>
<evidence type="ECO:0000250" key="1"/>
<evidence type="ECO:0000255" key="2">
    <source>
        <dbReference type="PROSITE-ProRule" id="PRU00047"/>
    </source>
</evidence>
<evidence type="ECO:0000256" key="3">
    <source>
        <dbReference type="SAM" id="MobiDB-lite"/>
    </source>
</evidence>
<evidence type="ECO:0000305" key="4"/>
<keyword id="KW-0167">Capsid protein</keyword>
<keyword id="KW-1048">Host nucleus</keyword>
<keyword id="KW-0479">Metal-binding</keyword>
<keyword id="KW-1145">T=7 icosahedral capsid protein</keyword>
<keyword id="KW-1163">Viral penetration into host nucleus</keyword>
<keyword id="KW-0946">Virion</keyword>
<keyword id="KW-1160">Virus entry into host cell</keyword>
<keyword id="KW-0862">Zinc</keyword>
<keyword id="KW-0863">Zinc-finger</keyword>
<sequence>MAESILDRTINRFWYNLGEDCLSESQFDLMIRLMEESLDGDQIIDLTSLPSDNLQVEQVMTTTDDSISEESEFLLAIGEISEDESDSGEEPEFEQVRMDRTGGTEIPKEEDGEGPSRYNERKRKTPEDRYFPTQPKTIPGQKQTSMGMLNIDCQINRRTLIDDWAAEIGLIVKTNREDYLDPETILLLMEHKTSGIAKELIRNTRWNRTTGDIIEQVINAMYTMFLGLNYSDNKVAEKIDEQEKAKIRMTKLQLFDICYLEEFTCDYEKNMYKTEMADFPGYINQYLSKIPIIGEKALTRFRHEANGTSIYSLGFAAKIVKEELSKICDLSKKQKKLKKFNKKCCSIGEASVEYGGKKTSKKKYHKRYKKRYKVYKPYKKKKKFRSGKYFKPKEKKGSKRKYCPKGKKDCRCWICNIEGHYANECPNRQSSEKAHILQQAENLGLQPVEEPYEGVQEVFILEYKEEEEETSTEESDDESSTSEDSDSD</sequence>
<proteinExistence type="inferred from homology"/>
<feature type="chain" id="PRO_0000222029" description="Capsid protein">
    <location>
        <begin position="1"/>
        <end position="488"/>
    </location>
</feature>
<feature type="zinc finger region" description="CCHC-type" evidence="2">
    <location>
        <begin position="410"/>
        <end position="427"/>
    </location>
</feature>
<feature type="region of interest" description="Disordered" evidence="3">
    <location>
        <begin position="80"/>
        <end position="143"/>
    </location>
</feature>
<feature type="region of interest" description="Disordered" evidence="3">
    <location>
        <begin position="463"/>
        <end position="488"/>
    </location>
</feature>
<feature type="short sequence motif" description="Nuclear localization signal" evidence="1">
    <location>
        <begin position="121"/>
        <end position="124"/>
    </location>
</feature>
<feature type="compositionally biased region" description="Acidic residues" evidence="3">
    <location>
        <begin position="80"/>
        <end position="93"/>
    </location>
</feature>
<feature type="compositionally biased region" description="Basic and acidic residues" evidence="3">
    <location>
        <begin position="94"/>
        <end position="109"/>
    </location>
</feature>
<feature type="compositionally biased region" description="Polar residues" evidence="3">
    <location>
        <begin position="134"/>
        <end position="143"/>
    </location>
</feature>
<feature type="compositionally biased region" description="Acidic residues" evidence="3">
    <location>
        <begin position="464"/>
        <end position="488"/>
    </location>
</feature>
<reference key="1">
    <citation type="journal article" date="1981" name="Nucleic Acids Res.">
        <title>The complete nucleotide sequence of an infectious clone of cauliflower mosaic virus by M13mp7 shotgun sequencing.</title>
        <authorList>
            <person name="Gardner R.C."/>
            <person name="Howarth A.J."/>
            <person name="Hahn P."/>
            <person name="Brown-Luedi M."/>
            <person name="Shepherd R.J."/>
            <person name="Messing J."/>
        </authorList>
    </citation>
    <scope>NUCLEOTIDE SEQUENCE [GENOMIC DNA]</scope>
</reference>
<dbReference type="EMBL" id="V00140">
    <property type="protein sequence ID" value="CAA23455.1"/>
    <property type="molecule type" value="Genomic_DNA"/>
</dbReference>
<dbReference type="PIR" id="A04154">
    <property type="entry name" value="VCCV4C"/>
</dbReference>
<dbReference type="Proteomes" id="UP000008438">
    <property type="component" value="Genome"/>
</dbReference>
<dbReference type="GO" id="GO:0043657">
    <property type="term" value="C:host cell"/>
    <property type="evidence" value="ECO:0007669"/>
    <property type="project" value="GOC"/>
</dbReference>
<dbReference type="GO" id="GO:0042025">
    <property type="term" value="C:host cell nucleus"/>
    <property type="evidence" value="ECO:0007669"/>
    <property type="project" value="UniProtKB-SubCell"/>
</dbReference>
<dbReference type="GO" id="GO:0039620">
    <property type="term" value="C:T=7 icosahedral viral capsid"/>
    <property type="evidence" value="ECO:0007669"/>
    <property type="project" value="UniProtKB-KW"/>
</dbReference>
<dbReference type="GO" id="GO:0003676">
    <property type="term" value="F:nucleic acid binding"/>
    <property type="evidence" value="ECO:0007669"/>
    <property type="project" value="InterPro"/>
</dbReference>
<dbReference type="GO" id="GO:0005198">
    <property type="term" value="F:structural molecule activity"/>
    <property type="evidence" value="ECO:0007669"/>
    <property type="project" value="InterPro"/>
</dbReference>
<dbReference type="GO" id="GO:0008270">
    <property type="term" value="F:zinc ion binding"/>
    <property type="evidence" value="ECO:0007669"/>
    <property type="project" value="UniProtKB-KW"/>
</dbReference>
<dbReference type="GO" id="GO:0046718">
    <property type="term" value="P:symbiont entry into host cell"/>
    <property type="evidence" value="ECO:0007669"/>
    <property type="project" value="UniProtKB-KW"/>
</dbReference>
<dbReference type="GO" id="GO:0075732">
    <property type="term" value="P:viral penetration into host nucleus"/>
    <property type="evidence" value="ECO:0007669"/>
    <property type="project" value="UniProtKB-KW"/>
</dbReference>
<dbReference type="InterPro" id="IPR001988">
    <property type="entry name" value="Caulimo_coat"/>
</dbReference>
<dbReference type="InterPro" id="IPR001878">
    <property type="entry name" value="Znf_CCHC"/>
</dbReference>
<dbReference type="InterPro" id="IPR036875">
    <property type="entry name" value="Znf_CCHC_sf"/>
</dbReference>
<dbReference type="Pfam" id="PF22909">
    <property type="entry name" value="Caulimovir_coat_dom"/>
    <property type="match status" value="1"/>
</dbReference>
<dbReference type="PRINTS" id="PR00221">
    <property type="entry name" value="CAULIMOCOAT"/>
</dbReference>
<dbReference type="SMART" id="SM00343">
    <property type="entry name" value="ZnF_C2HC"/>
    <property type="match status" value="1"/>
</dbReference>
<dbReference type="SUPFAM" id="SSF57756">
    <property type="entry name" value="Retrovirus zinc finger-like domains"/>
    <property type="match status" value="1"/>
</dbReference>
<dbReference type="PROSITE" id="PS50158">
    <property type="entry name" value="ZF_CCHC"/>
    <property type="match status" value="1"/>
</dbReference>
<name>CAPSD_CAMVC</name>
<organism>
    <name type="scientific">Cauliflower mosaic virus (strain CM-1841)</name>
    <name type="common">CaMV</name>
    <dbReference type="NCBI Taxonomy" id="10644"/>
    <lineage>
        <taxon>Viruses</taxon>
        <taxon>Riboviria</taxon>
        <taxon>Pararnavirae</taxon>
        <taxon>Artverviricota</taxon>
        <taxon>Revtraviricetes</taxon>
        <taxon>Ortervirales</taxon>
        <taxon>Caulimoviridae</taxon>
        <taxon>Caulimovirus</taxon>
        <taxon>Caulimovirus tessellobrassicae</taxon>
    </lineage>
</organism>
<accession>P03543</accession>
<comment type="function">
    <text evidence="1">Self assembles to form an icosahedral capsid, about 50 nm in diameter, nm, composed of 420 subunits of the viral capsid protein. The capsid encapsulates the genomic dsDNA. Following virus entry into host cell, provides nuclear import of the viral genome. Virus particles do not enter the nucleus, but dock at the nuclear membrane through the interaction with host importins (By similarity).</text>
</comment>
<comment type="subunit">
    <text evidence="1">Interacts (via nuclear localization signal) with host importin alpha.</text>
</comment>
<comment type="subcellular location">
    <subcellularLocation>
        <location evidence="4">Virion</location>
    </subcellularLocation>
    <subcellularLocation>
        <location evidence="4">Host nucleus</location>
    </subcellularLocation>
</comment>
<comment type="similarity">
    <text evidence="4">Belongs to the caulimoviridae capsid protein family.</text>
</comment>